<organism>
    <name type="scientific">Mus musculus</name>
    <name type="common">Mouse</name>
    <dbReference type="NCBI Taxonomy" id="10090"/>
    <lineage>
        <taxon>Eukaryota</taxon>
        <taxon>Metazoa</taxon>
        <taxon>Chordata</taxon>
        <taxon>Craniata</taxon>
        <taxon>Vertebrata</taxon>
        <taxon>Euteleostomi</taxon>
        <taxon>Mammalia</taxon>
        <taxon>Eutheria</taxon>
        <taxon>Euarchontoglires</taxon>
        <taxon>Glires</taxon>
        <taxon>Rodentia</taxon>
        <taxon>Myomorpha</taxon>
        <taxon>Muroidea</taxon>
        <taxon>Muridae</taxon>
        <taxon>Murinae</taxon>
        <taxon>Mus</taxon>
        <taxon>Mus</taxon>
    </lineage>
</organism>
<evidence type="ECO:0000255" key="1"/>
<evidence type="ECO:0000256" key="2">
    <source>
        <dbReference type="SAM" id="MobiDB-lite"/>
    </source>
</evidence>
<evidence type="ECO:0000269" key="3">
    <source>
    </source>
</evidence>
<accession>Q9D9F8</accession>
<name>MIPO1_MOUSE</name>
<keyword id="KW-0175">Coiled coil</keyword>
<keyword id="KW-1185">Reference proteome</keyword>
<dbReference type="EMBL" id="AK006974">
    <property type="protein sequence ID" value="BAB24815.1"/>
    <property type="molecule type" value="mRNA"/>
</dbReference>
<dbReference type="SMR" id="Q9D9F8"/>
<dbReference type="FunCoup" id="Q9D9F8">
    <property type="interactions" value="1181"/>
</dbReference>
<dbReference type="STRING" id="10090.ENSMUSP00000121617"/>
<dbReference type="PaxDb" id="10090-ENSMUSP00000121617"/>
<dbReference type="ProteomicsDB" id="252567"/>
<dbReference type="AGR" id="MGI:1920740"/>
<dbReference type="MGI" id="MGI:1920740">
    <property type="gene designation" value="Mipol1"/>
</dbReference>
<dbReference type="eggNOG" id="ENOG502QS3V">
    <property type="taxonomic scope" value="Eukaryota"/>
</dbReference>
<dbReference type="InParanoid" id="Q9D9F8"/>
<dbReference type="ChiTaRS" id="Mipol1">
    <property type="organism name" value="mouse"/>
</dbReference>
<dbReference type="PRO" id="PR:Q9D9F8"/>
<dbReference type="Proteomes" id="UP000000589">
    <property type="component" value="Unplaced"/>
</dbReference>
<dbReference type="RNAct" id="Q9D9F8">
    <property type="molecule type" value="protein"/>
</dbReference>
<dbReference type="GO" id="GO:0005634">
    <property type="term" value="C:nucleus"/>
    <property type="evidence" value="ECO:0000266"/>
    <property type="project" value="MGI"/>
</dbReference>
<dbReference type="InterPro" id="IPR026175">
    <property type="entry name" value="MIPOL1"/>
</dbReference>
<dbReference type="PANTHER" id="PTHR22089">
    <property type="entry name" value="MIRROR-IMAGE POLYDACTYLY GENE 1 PROTEIN"/>
    <property type="match status" value="1"/>
</dbReference>
<dbReference type="PANTHER" id="PTHR22089:SF2">
    <property type="entry name" value="MIRROR-IMAGE POLYDACTYLY GENE 1 PROTEIN"/>
    <property type="match status" value="1"/>
</dbReference>
<sequence>MNSEQSIRELGNEVPSEDLELPGRKTSNFQVLQPCRDEGASAECSIVECGKNYEPVISHQVIPDLNKETSVAYLQKELEILRASNTKLQEKLAKEDKEKRRLKLKLELQEKAAEADIAERTAALVEEVYFAQRERDEAIMCRLQLALKERDEAIAHVKHMEMSLKMLENINPKENDMTLQELLDRINNADTGIAIQKNGAVIVDTIYKTTGCRKRITAEEMSAVLEERDAALSQCKQLHQRLLDLKKQNQTSTNNTKHPTAKNNQEHTLKYNLNIASIN</sequence>
<comment type="developmental stage">
    <text evidence="3">Expressed in embryo between 10.5 and 13.5 dpc.</text>
</comment>
<reference key="1">
    <citation type="journal article" date="2005" name="Science">
        <title>The transcriptional landscape of the mammalian genome.</title>
        <authorList>
            <person name="Carninci P."/>
            <person name="Kasukawa T."/>
            <person name="Katayama S."/>
            <person name="Gough J."/>
            <person name="Frith M.C."/>
            <person name="Maeda N."/>
            <person name="Oyama R."/>
            <person name="Ravasi T."/>
            <person name="Lenhard B."/>
            <person name="Wells C."/>
            <person name="Kodzius R."/>
            <person name="Shimokawa K."/>
            <person name="Bajic V.B."/>
            <person name="Brenner S.E."/>
            <person name="Batalov S."/>
            <person name="Forrest A.R."/>
            <person name="Zavolan M."/>
            <person name="Davis M.J."/>
            <person name="Wilming L.G."/>
            <person name="Aidinis V."/>
            <person name="Allen J.E."/>
            <person name="Ambesi-Impiombato A."/>
            <person name="Apweiler R."/>
            <person name="Aturaliya R.N."/>
            <person name="Bailey T.L."/>
            <person name="Bansal M."/>
            <person name="Baxter L."/>
            <person name="Beisel K.W."/>
            <person name="Bersano T."/>
            <person name="Bono H."/>
            <person name="Chalk A.M."/>
            <person name="Chiu K.P."/>
            <person name="Choudhary V."/>
            <person name="Christoffels A."/>
            <person name="Clutterbuck D.R."/>
            <person name="Crowe M.L."/>
            <person name="Dalla E."/>
            <person name="Dalrymple B.P."/>
            <person name="de Bono B."/>
            <person name="Della Gatta G."/>
            <person name="di Bernardo D."/>
            <person name="Down T."/>
            <person name="Engstrom P."/>
            <person name="Fagiolini M."/>
            <person name="Faulkner G."/>
            <person name="Fletcher C.F."/>
            <person name="Fukushima T."/>
            <person name="Furuno M."/>
            <person name="Futaki S."/>
            <person name="Gariboldi M."/>
            <person name="Georgii-Hemming P."/>
            <person name="Gingeras T.R."/>
            <person name="Gojobori T."/>
            <person name="Green R.E."/>
            <person name="Gustincich S."/>
            <person name="Harbers M."/>
            <person name="Hayashi Y."/>
            <person name="Hensch T.K."/>
            <person name="Hirokawa N."/>
            <person name="Hill D."/>
            <person name="Huminiecki L."/>
            <person name="Iacono M."/>
            <person name="Ikeo K."/>
            <person name="Iwama A."/>
            <person name="Ishikawa T."/>
            <person name="Jakt M."/>
            <person name="Kanapin A."/>
            <person name="Katoh M."/>
            <person name="Kawasawa Y."/>
            <person name="Kelso J."/>
            <person name="Kitamura H."/>
            <person name="Kitano H."/>
            <person name="Kollias G."/>
            <person name="Krishnan S.P."/>
            <person name="Kruger A."/>
            <person name="Kummerfeld S.K."/>
            <person name="Kurochkin I.V."/>
            <person name="Lareau L.F."/>
            <person name="Lazarevic D."/>
            <person name="Lipovich L."/>
            <person name="Liu J."/>
            <person name="Liuni S."/>
            <person name="McWilliam S."/>
            <person name="Madan Babu M."/>
            <person name="Madera M."/>
            <person name="Marchionni L."/>
            <person name="Matsuda H."/>
            <person name="Matsuzawa S."/>
            <person name="Miki H."/>
            <person name="Mignone F."/>
            <person name="Miyake S."/>
            <person name="Morris K."/>
            <person name="Mottagui-Tabar S."/>
            <person name="Mulder N."/>
            <person name="Nakano N."/>
            <person name="Nakauchi H."/>
            <person name="Ng P."/>
            <person name="Nilsson R."/>
            <person name="Nishiguchi S."/>
            <person name="Nishikawa S."/>
            <person name="Nori F."/>
            <person name="Ohara O."/>
            <person name="Okazaki Y."/>
            <person name="Orlando V."/>
            <person name="Pang K.C."/>
            <person name="Pavan W.J."/>
            <person name="Pavesi G."/>
            <person name="Pesole G."/>
            <person name="Petrovsky N."/>
            <person name="Piazza S."/>
            <person name="Reed J."/>
            <person name="Reid J.F."/>
            <person name="Ring B.Z."/>
            <person name="Ringwald M."/>
            <person name="Rost B."/>
            <person name="Ruan Y."/>
            <person name="Salzberg S.L."/>
            <person name="Sandelin A."/>
            <person name="Schneider C."/>
            <person name="Schoenbach C."/>
            <person name="Sekiguchi K."/>
            <person name="Semple C.A."/>
            <person name="Seno S."/>
            <person name="Sessa L."/>
            <person name="Sheng Y."/>
            <person name="Shibata Y."/>
            <person name="Shimada H."/>
            <person name="Shimada K."/>
            <person name="Silva D."/>
            <person name="Sinclair B."/>
            <person name="Sperling S."/>
            <person name="Stupka E."/>
            <person name="Sugiura K."/>
            <person name="Sultana R."/>
            <person name="Takenaka Y."/>
            <person name="Taki K."/>
            <person name="Tammoja K."/>
            <person name="Tan S.L."/>
            <person name="Tang S."/>
            <person name="Taylor M.S."/>
            <person name="Tegner J."/>
            <person name="Teichmann S.A."/>
            <person name="Ueda H.R."/>
            <person name="van Nimwegen E."/>
            <person name="Verardo R."/>
            <person name="Wei C.L."/>
            <person name="Yagi K."/>
            <person name="Yamanishi H."/>
            <person name="Zabarovsky E."/>
            <person name="Zhu S."/>
            <person name="Zimmer A."/>
            <person name="Hide W."/>
            <person name="Bult C."/>
            <person name="Grimmond S.M."/>
            <person name="Teasdale R.D."/>
            <person name="Liu E.T."/>
            <person name="Brusic V."/>
            <person name="Quackenbush J."/>
            <person name="Wahlestedt C."/>
            <person name="Mattick J.S."/>
            <person name="Hume D.A."/>
            <person name="Kai C."/>
            <person name="Sasaki D."/>
            <person name="Tomaru Y."/>
            <person name="Fukuda S."/>
            <person name="Kanamori-Katayama M."/>
            <person name="Suzuki M."/>
            <person name="Aoki J."/>
            <person name="Arakawa T."/>
            <person name="Iida J."/>
            <person name="Imamura K."/>
            <person name="Itoh M."/>
            <person name="Kato T."/>
            <person name="Kawaji H."/>
            <person name="Kawagashira N."/>
            <person name="Kawashima T."/>
            <person name="Kojima M."/>
            <person name="Kondo S."/>
            <person name="Konno H."/>
            <person name="Nakano K."/>
            <person name="Ninomiya N."/>
            <person name="Nishio T."/>
            <person name="Okada M."/>
            <person name="Plessy C."/>
            <person name="Shibata K."/>
            <person name="Shiraki T."/>
            <person name="Suzuki S."/>
            <person name="Tagami M."/>
            <person name="Waki K."/>
            <person name="Watahiki A."/>
            <person name="Okamura-Oho Y."/>
            <person name="Suzuki H."/>
            <person name="Kawai J."/>
            <person name="Hayashizaki Y."/>
        </authorList>
    </citation>
    <scope>NUCLEOTIDE SEQUENCE [LARGE SCALE MRNA]</scope>
    <source>
        <strain>C57BL/6J</strain>
        <tissue>Testis</tissue>
    </source>
</reference>
<reference key="2">
    <citation type="journal article" date="2002" name="J. Hum. Genet.">
        <title>A novel gene is disrupted at a 14q13 breakpoint of t(2;14) in a patient with mirror-image polydactyly of hands and feet.</title>
        <authorList>
            <person name="Kondoh S."/>
            <person name="Sugawara H."/>
            <person name="Harada N."/>
            <person name="Matsumoto N."/>
            <person name="Ohashi H."/>
            <person name="Sato M."/>
            <person name="Kantaputra P.N."/>
            <person name="Ogino T."/>
            <person name="Tomita H."/>
            <person name="Ohta T."/>
            <person name="Kishino T."/>
            <person name="Fukushima Y."/>
            <person name="Niikawa N."/>
            <person name="Yoshiura K."/>
        </authorList>
    </citation>
    <scope>DEVELOPMENTAL STAGE</scope>
</reference>
<proteinExistence type="evidence at transcript level"/>
<gene>
    <name type="primary">Mipol1</name>
</gene>
<feature type="chain" id="PRO_0000096491" description="Mirror-image polydactyly gene 1 protein homolog">
    <location>
        <begin position="1"/>
        <end position="279"/>
    </location>
</feature>
<feature type="region of interest" description="Disordered" evidence="2">
    <location>
        <begin position="1"/>
        <end position="21"/>
    </location>
</feature>
<feature type="region of interest" description="Disordered" evidence="2">
    <location>
        <begin position="247"/>
        <end position="268"/>
    </location>
</feature>
<feature type="coiled-coil region" evidence="1">
    <location>
        <begin position="65"/>
        <end position="169"/>
    </location>
</feature>
<feature type="coiled-coil region" evidence="1">
    <location>
        <begin position="218"/>
        <end position="255"/>
    </location>
</feature>
<feature type="compositionally biased region" description="Basic and acidic residues" evidence="2">
    <location>
        <begin position="1"/>
        <end position="11"/>
    </location>
</feature>
<feature type="compositionally biased region" description="Polar residues" evidence="2">
    <location>
        <begin position="248"/>
        <end position="263"/>
    </location>
</feature>
<protein>
    <recommendedName>
        <fullName>Mirror-image polydactyly gene 1 protein homolog</fullName>
    </recommendedName>
</protein>